<gene>
    <name type="primary">Cox6c2</name>
    <name type="synonym">Cox6c</name>
</gene>
<feature type="initiator methionine" description="Removed" evidence="2">
    <location>
        <position position="1"/>
    </location>
</feature>
<feature type="chain" id="PRO_0000191304" description="Cytochrome c oxidase subunit 6C-2">
    <location>
        <begin position="2"/>
        <end position="76"/>
    </location>
</feature>
<feature type="topological domain" description="Mitochondrial matrix" evidence="1">
    <location>
        <begin position="4"/>
        <end position="14"/>
    </location>
</feature>
<feature type="transmembrane region" description="Helical" evidence="1">
    <location>
        <begin position="15"/>
        <end position="55"/>
    </location>
</feature>
<feature type="topological domain" description="Mitochondrial intermembrane" evidence="1">
    <location>
        <begin position="56"/>
        <end position="76"/>
    </location>
</feature>
<feature type="modified residue" description="Phosphoserine" evidence="4">
    <location>
        <position position="74"/>
    </location>
</feature>
<feature type="sequence conflict" description="In Ref. 3; AAA79270." evidence="3" ref="3">
    <original>V</original>
    <variation>A</variation>
    <location>
        <position position="29"/>
    </location>
</feature>
<reference key="1">
    <citation type="journal article" date="1988" name="DNA">
        <title>Organization and nucleotide sequence of two chromosomal genes for rat cytochrome c oxidase subunit VIc: a structural and a processed gene.</title>
        <authorList>
            <person name="Suske G."/>
            <person name="Enders C."/>
            <person name="Schlerf A."/>
            <person name="Kadenbach B."/>
        </authorList>
    </citation>
    <scope>NUCLEOTIDE SEQUENCE [GENOMIC DNA]</scope>
    <source>
        <tissue>Liver</tissue>
    </source>
</reference>
<reference key="2">
    <citation type="journal article" date="1987" name="Eur. J. Biochem.">
        <title>Molecular cloning and further characterization of cDNAs for rat nuclear-encoded cytochrome c oxidase subunits VIc and VIII.</title>
        <authorList>
            <person name="Suske G."/>
            <person name="Mengel T."/>
            <person name="Cordingley M."/>
            <person name="Kadenbach B."/>
        </authorList>
    </citation>
    <scope>NUCLEOTIDE SEQUENCE</scope>
</reference>
<reference key="3">
    <citation type="journal article" date="1988" name="Ann. N. Y. Acad. Sci.">
        <title>Complexity of nucleus-encoded genes of mammalian cytochrome c oxidase.</title>
        <authorList>
            <person name="Cao X.N."/>
            <person name="Hengst L."/>
            <person name="Schlerf A."/>
            <person name="Droste M."/>
            <person name="Mengel T."/>
            <person name="Kadenbach B."/>
        </authorList>
    </citation>
    <scope>NUCLEOTIDE SEQUENCE</scope>
    <source>
        <tissue>Liver</tissue>
    </source>
</reference>
<reference key="4">
    <citation type="journal article" date="2004" name="Genome Res.">
        <title>The status, quality, and expansion of the NIH full-length cDNA project: the Mammalian Gene Collection (MGC).</title>
        <authorList>
            <consortium name="The MGC Project Team"/>
        </authorList>
    </citation>
    <scope>NUCLEOTIDE SEQUENCE [LARGE SCALE MRNA]</scope>
    <source>
        <tissue>Pituitary</tissue>
    </source>
</reference>
<reference key="5">
    <citation type="journal article" date="1984" name="Biochem. Biophys. Res. Commun.">
        <title>Construction of a cDNA clone for a nuclear-coded subunit of cytochrome c oxidase from rat liver.</title>
        <authorList>
            <person name="Parimoo S."/>
            <person name="Seelan R.S."/>
            <person name="Desai S."/>
            <person name="Buse G."/>
            <person name="Padmanaban G."/>
        </authorList>
    </citation>
    <scope>NUCLEOTIDE SEQUENCE [MRNA] OF 44-76</scope>
</reference>
<reference key="6">
    <citation type="journal article" date="1995" name="Eur. J. Biochem.">
        <title>Cytochrome-c oxidase in developing rat heart. Enzymic properties and amino-terminal sequences suggest identity of the fetal heart and the adult liver isoform.</title>
        <authorList>
            <person name="Schaegger H."/>
            <person name="Noack H."/>
            <person name="Halangk W."/>
            <person name="Brandt U."/>
            <person name="von Jagow G."/>
        </authorList>
    </citation>
    <scope>PROTEIN SEQUENCE OF 2-11</scope>
    <source>
        <strain>Wistar</strain>
        <tissue>Liver</tissue>
    </source>
</reference>
<reference key="7">
    <citation type="submission" date="2007-07" db="UniProtKB">
        <authorList>
            <person name="Lubec G."/>
            <person name="Kang S.U."/>
        </authorList>
    </citation>
    <scope>PROTEIN SEQUENCE OF 40-46 AND 68-76</scope>
    <scope>IDENTIFICATION BY MASS SPECTROMETRY</scope>
    <source>
        <strain>Sprague-Dawley</strain>
        <tissue>Brain</tissue>
    </source>
</reference>
<reference key="8">
    <citation type="journal article" date="2012" name="Nat. Commun.">
        <title>Quantitative maps of protein phosphorylation sites across 14 different rat organs and tissues.</title>
        <authorList>
            <person name="Lundby A."/>
            <person name="Secher A."/>
            <person name="Lage K."/>
            <person name="Nordsborg N.B."/>
            <person name="Dmytriyev A."/>
            <person name="Lundby C."/>
            <person name="Olsen J.V."/>
        </authorList>
    </citation>
    <scope>PHOSPHORYLATION [LARGE SCALE ANALYSIS] AT SER-74</scope>
    <scope>IDENTIFICATION BY MASS SPECTROMETRY [LARGE SCALE ANALYSIS]</scope>
</reference>
<organism>
    <name type="scientific">Rattus norvegicus</name>
    <name type="common">Rat</name>
    <dbReference type="NCBI Taxonomy" id="10116"/>
    <lineage>
        <taxon>Eukaryota</taxon>
        <taxon>Metazoa</taxon>
        <taxon>Chordata</taxon>
        <taxon>Craniata</taxon>
        <taxon>Vertebrata</taxon>
        <taxon>Euteleostomi</taxon>
        <taxon>Mammalia</taxon>
        <taxon>Eutheria</taxon>
        <taxon>Euarchontoglires</taxon>
        <taxon>Glires</taxon>
        <taxon>Rodentia</taxon>
        <taxon>Myomorpha</taxon>
        <taxon>Muroidea</taxon>
        <taxon>Muridae</taxon>
        <taxon>Murinae</taxon>
        <taxon>Rattus</taxon>
    </lineage>
</organism>
<proteinExistence type="evidence at protein level"/>
<keyword id="KW-0903">Direct protein sequencing</keyword>
<keyword id="KW-0472">Membrane</keyword>
<keyword id="KW-0496">Mitochondrion</keyword>
<keyword id="KW-0999">Mitochondrion inner membrane</keyword>
<keyword id="KW-0597">Phosphoprotein</keyword>
<keyword id="KW-1185">Reference proteome</keyword>
<keyword id="KW-0812">Transmembrane</keyword>
<keyword id="KW-1133">Transmembrane helix</keyword>
<comment type="function">
    <text evidence="1">Component of the cytochrome c oxidase, the last enzyme in the mitochondrial electron transport chain which drives oxidative phosphorylation. The respiratory chain contains 3 multisubunit complexes succinate dehydrogenase (complex II, CII), ubiquinol-cytochrome c oxidoreductase (cytochrome b-c1 complex, complex III, CIII) and cytochrome c oxidase (complex IV, CIV), that cooperate to transfer electrons derived from NADH and succinate to molecular oxygen, creating an electrochemical gradient over the inner membrane that drives transmembrane transport and the ATP synthase. Cytochrome c oxidase is the component of the respiratory chain that catalyzes the reduction of oxygen to water. Electrons originating from reduced cytochrome c in the intermembrane space (IMS) are transferred via the dinuclear copper A center (CU(A)) of subunit 2 and heme A of subunit 1 to the active site in subunit 1, a binuclear center (BNC) formed by heme A3 and copper B (CU(B)). The BNC reduces molecular oxygen to 2 water molecules using 4 electrons from cytochrome c in the IMS and 4 protons from the mitochondrial matrix.</text>
</comment>
<comment type="pathway">
    <text evidence="1">Energy metabolism; oxidative phosphorylation.</text>
</comment>
<comment type="subunit">
    <text evidence="1">Component of the cytochrome c oxidase (complex IV, CIV), a multisubunit enzyme composed of 14 subunits. The complex is composed of a catalytic core of 3 subunits MT-CO1, MT-CO2 and MT-CO3, encoded in the mitochondrial DNA, and 11 supernumerary subunits COX4I, COX5A, COX5B, COX6A, COX6B, COX6C, COX7A, COX7B, COX7C, COX8 and NDUFA4, which are encoded in the nuclear genome. The complex exists as a monomer or a dimer and forms supercomplexes (SCs) in the inner mitochondrial membrane with NADH-ubiquinone oxidoreductase (complex I, CI) and ubiquinol-cytochrome c oxidoreductase (cytochrome b-c1 complex, complex III, CIII), resulting in different assemblies (supercomplex SCI(1)III(2)IV(1) and megacomplex MCI(2)III(2)IV(2)).</text>
</comment>
<comment type="subcellular location">
    <subcellularLocation>
        <location evidence="1">Mitochondrion inner membrane</location>
        <topology evidence="1">Single-pass membrane protein</topology>
    </subcellularLocation>
</comment>
<comment type="similarity">
    <text evidence="3">Belongs to the cytochrome c oxidase subunit 6c family.</text>
</comment>
<comment type="sequence caution" evidence="3">
    <conflict type="erroneous initiation">
        <sequence resource="EMBL-CDS" id="AAA79270"/>
    </conflict>
</comment>
<protein>
    <recommendedName>
        <fullName>Cytochrome c oxidase subunit 6C-2</fullName>
    </recommendedName>
    <alternativeName>
        <fullName>Cytochrome c oxidase polypeptide VIc-2</fullName>
    </alternativeName>
</protein>
<dbReference type="EMBL" id="M20153">
    <property type="protein sequence ID" value="AAA41011.1"/>
    <property type="molecule type" value="Genomic_DNA"/>
</dbReference>
<dbReference type="EMBL" id="M20152">
    <property type="protein sequence ID" value="AAA41011.1"/>
    <property type="status" value="JOINED"/>
    <property type="molecule type" value="Genomic_DNA"/>
</dbReference>
<dbReference type="EMBL" id="M27466">
    <property type="protein sequence ID" value="AAA79271.1"/>
    <property type="molecule type" value="mRNA"/>
</dbReference>
<dbReference type="EMBL" id="M27467">
    <property type="protein sequence ID" value="AAA79270.1"/>
    <property type="status" value="ALT_INIT"/>
    <property type="molecule type" value="mRNA"/>
</dbReference>
<dbReference type="EMBL" id="BC058480">
    <property type="protein sequence ID" value="AAH58480.1"/>
    <property type="molecule type" value="mRNA"/>
</dbReference>
<dbReference type="EMBL" id="K01565">
    <property type="protein sequence ID" value="AAA41013.1"/>
    <property type="molecule type" value="mRNA"/>
</dbReference>
<dbReference type="PIR" id="S00114">
    <property type="entry name" value="S00114"/>
</dbReference>
<dbReference type="RefSeq" id="NP_062233.2">
    <property type="nucleotide sequence ID" value="NM_019360.2"/>
</dbReference>
<dbReference type="SMR" id="P11951"/>
<dbReference type="BioGRID" id="248538">
    <property type="interactions" value="1"/>
</dbReference>
<dbReference type="FunCoup" id="P11951">
    <property type="interactions" value="1204"/>
</dbReference>
<dbReference type="IntAct" id="P11951">
    <property type="interactions" value="1"/>
</dbReference>
<dbReference type="MINT" id="P11951"/>
<dbReference type="STRING" id="10116.ENSRNOP00000014407"/>
<dbReference type="CarbonylDB" id="P11951"/>
<dbReference type="GlyGen" id="P11951">
    <property type="glycosylation" value="2 sites, 1 O-linked glycan (2 sites)"/>
</dbReference>
<dbReference type="iPTMnet" id="P11951"/>
<dbReference type="PhosphoSitePlus" id="P11951"/>
<dbReference type="SwissPalm" id="P11951"/>
<dbReference type="jPOST" id="P11951"/>
<dbReference type="PaxDb" id="10116-ENSRNOP00000014407"/>
<dbReference type="Ensembl" id="ENSRNOT00000014407.6">
    <property type="protein sequence ID" value="ENSRNOP00000014407.2"/>
    <property type="gene ID" value="ENSRNOG00000010807.6"/>
</dbReference>
<dbReference type="GeneID" id="54322"/>
<dbReference type="KEGG" id="rno:54322"/>
<dbReference type="UCSC" id="RGD:620616">
    <property type="organism name" value="rat"/>
</dbReference>
<dbReference type="AGR" id="RGD:620616"/>
<dbReference type="CTD" id="1345"/>
<dbReference type="RGD" id="620616">
    <property type="gene designation" value="Cox6c"/>
</dbReference>
<dbReference type="eggNOG" id="ENOG502SEI2">
    <property type="taxonomic scope" value="Eukaryota"/>
</dbReference>
<dbReference type="GeneTree" id="ENSGT00940000163089"/>
<dbReference type="HOGENOM" id="CLU_196254_0_0_1"/>
<dbReference type="InParanoid" id="P11951"/>
<dbReference type="OMA" id="FIQGRQN"/>
<dbReference type="OrthoDB" id="10051322at2759"/>
<dbReference type="PhylomeDB" id="P11951"/>
<dbReference type="TreeFam" id="TF353619"/>
<dbReference type="Reactome" id="R-RNO-5628897">
    <property type="pathway name" value="TP53 Regulates Metabolic Genes"/>
</dbReference>
<dbReference type="Reactome" id="R-RNO-611105">
    <property type="pathway name" value="Respiratory electron transport"/>
</dbReference>
<dbReference type="Reactome" id="R-RNO-9707564">
    <property type="pathway name" value="Cytoprotection by HMOX1"/>
</dbReference>
<dbReference type="Reactome" id="R-RNO-9864848">
    <property type="pathway name" value="Complex IV assembly"/>
</dbReference>
<dbReference type="UniPathway" id="UPA00705"/>
<dbReference type="PRO" id="PR:P11951"/>
<dbReference type="Proteomes" id="UP000002494">
    <property type="component" value="Chromosome 7"/>
</dbReference>
<dbReference type="Bgee" id="ENSRNOG00000010807">
    <property type="expression patterns" value="Expressed in heart and 20 other cell types or tissues"/>
</dbReference>
<dbReference type="GO" id="GO:0005743">
    <property type="term" value="C:mitochondrial inner membrane"/>
    <property type="evidence" value="ECO:0000266"/>
    <property type="project" value="RGD"/>
</dbReference>
<dbReference type="GO" id="GO:0031966">
    <property type="term" value="C:mitochondrial membrane"/>
    <property type="evidence" value="ECO:0000266"/>
    <property type="project" value="RGD"/>
</dbReference>
<dbReference type="GO" id="GO:0045277">
    <property type="term" value="C:respiratory chain complex IV"/>
    <property type="evidence" value="ECO:0000266"/>
    <property type="project" value="RGD"/>
</dbReference>
<dbReference type="GO" id="GO:0006119">
    <property type="term" value="P:oxidative phosphorylation"/>
    <property type="evidence" value="ECO:0007669"/>
    <property type="project" value="UniProtKB-UniPathway"/>
</dbReference>
<dbReference type="CDD" id="cd22901">
    <property type="entry name" value="CcO_VIc"/>
    <property type="match status" value="1"/>
</dbReference>
<dbReference type="FunFam" id="4.10.93.10:FF:000001">
    <property type="entry name" value="Cytochrome c oxidase subunit 6C"/>
    <property type="match status" value="1"/>
</dbReference>
<dbReference type="Gene3D" id="4.10.93.10">
    <property type="entry name" value="Mitochondrial cytochrome c oxidase subunit VIc/VIIs"/>
    <property type="match status" value="1"/>
</dbReference>
<dbReference type="InterPro" id="IPR051389">
    <property type="entry name" value="Cytochrome_c_oxidase_VIc"/>
</dbReference>
<dbReference type="InterPro" id="IPR034884">
    <property type="entry name" value="Cytochrome_c_oxidase_VIc/VIIs"/>
</dbReference>
<dbReference type="InterPro" id="IPR037169">
    <property type="entry name" value="Cytochrome_c_oxidase_VIc_sf"/>
</dbReference>
<dbReference type="PANTHER" id="PTHR48416">
    <property type="entry name" value="CYTOCHROME C OXIDASE SUBUNIT 6C"/>
    <property type="match status" value="1"/>
</dbReference>
<dbReference type="PANTHER" id="PTHR48416:SF1">
    <property type="entry name" value="CYTOCHROME C OXIDASE SUBUNIT 6C"/>
    <property type="match status" value="1"/>
</dbReference>
<dbReference type="Pfam" id="PF02937">
    <property type="entry name" value="COX6C"/>
    <property type="match status" value="1"/>
</dbReference>
<dbReference type="SUPFAM" id="SSF81415">
    <property type="entry name" value="Mitochondrial cytochrome c oxidase subunit VIc"/>
    <property type="match status" value="1"/>
</dbReference>
<name>CX6C2_RAT</name>
<evidence type="ECO:0000250" key="1">
    <source>
        <dbReference type="UniProtKB" id="P04038"/>
    </source>
</evidence>
<evidence type="ECO:0000269" key="2">
    <source>
    </source>
</evidence>
<evidence type="ECO:0000305" key="3"/>
<evidence type="ECO:0007744" key="4">
    <source>
    </source>
</evidence>
<accession>P11951</accession>
<accession>Q63703</accession>
<sequence length="76" mass="8455">MSSGALLPKPQMRGLLAKRLRVHIVGAFVVALGVAAAYKFGVAEPRKKAYADFYRNYDSMKDFEEMRQAGVFQSAK</sequence>